<comment type="function">
    <text evidence="1">Zinc phosphodiesterase, which displays some tRNA 3'-processing endonuclease activity. Probably involved in tRNA maturation, by removing a 3'-trailer from precursor tRNA.</text>
</comment>
<comment type="catalytic activity">
    <reaction evidence="1">
        <text>Endonucleolytic cleavage of RNA, removing extra 3' nucleotides from tRNA precursor, generating 3' termini of tRNAs. A 3'-hydroxy group is left at the tRNA terminus and a 5'-phosphoryl group is left at the trailer molecule.</text>
        <dbReference type="EC" id="3.1.26.11"/>
    </reaction>
</comment>
<comment type="cofactor">
    <cofactor evidence="1">
        <name>Zn(2+)</name>
        <dbReference type="ChEBI" id="CHEBI:29105"/>
    </cofactor>
    <text evidence="1">Binds 2 Zn(2+) ions.</text>
</comment>
<comment type="subunit">
    <text evidence="1">Homodimer.</text>
</comment>
<comment type="similarity">
    <text evidence="1">Belongs to the RNase Z family.</text>
</comment>
<sequence length="291" mass="32953">MIQIFFLGTGAGSPSKKRKLPAFLVRREGLNILLDCGEGTQYTLMNNKLGINSIKIIGITHMHGDHVFGLLGVIASMGLLDRKETLYILGPRDLKDFLYTSFEYSKFNPSFKIEFIDNYNDQNITIATFKTCHTVESQGYLISERDRVKIDEEKLEKEKIKDWRVMRKLKEGKTVEYNGKFLKPEDYLVIKRGLKVAYTGDTIPCQSVIESVKGVDLLIHDSTFLNEPSACTYGHSNVADAAKVALEASVKLLALTHISPRYEDVTEHLKVARRIFPKSILPDDLSYITLK</sequence>
<organism>
    <name type="scientific">Saccharolobus islandicus (strain M.16.4 / Kamchatka #3)</name>
    <name type="common">Sulfolobus islandicus</name>
    <dbReference type="NCBI Taxonomy" id="426118"/>
    <lineage>
        <taxon>Archaea</taxon>
        <taxon>Thermoproteota</taxon>
        <taxon>Thermoprotei</taxon>
        <taxon>Sulfolobales</taxon>
        <taxon>Sulfolobaceae</taxon>
        <taxon>Saccharolobus</taxon>
    </lineage>
</organism>
<reference key="1">
    <citation type="journal article" date="2009" name="Proc. Natl. Acad. Sci. U.S.A.">
        <title>Biogeography of the Sulfolobus islandicus pan-genome.</title>
        <authorList>
            <person name="Reno M.L."/>
            <person name="Held N.L."/>
            <person name="Fields C.J."/>
            <person name="Burke P.V."/>
            <person name="Whitaker R.J."/>
        </authorList>
    </citation>
    <scope>NUCLEOTIDE SEQUENCE [LARGE SCALE GENOMIC DNA]</scope>
    <source>
        <strain>M.16.4 / Kamchatka #3</strain>
    </source>
</reference>
<dbReference type="EC" id="3.1.26.11" evidence="1"/>
<dbReference type="EMBL" id="CP001402">
    <property type="protein sequence ID" value="ACR41771.1"/>
    <property type="molecule type" value="Genomic_DNA"/>
</dbReference>
<dbReference type="RefSeq" id="WP_012711200.1">
    <property type="nucleotide sequence ID" value="NC_012726.1"/>
</dbReference>
<dbReference type="SMR" id="C4KGQ7"/>
<dbReference type="GeneID" id="84061503"/>
<dbReference type="KEGG" id="sid:M164_1167"/>
<dbReference type="HOGENOM" id="CLU_031317_2_1_2"/>
<dbReference type="Proteomes" id="UP000001479">
    <property type="component" value="Chromosome"/>
</dbReference>
<dbReference type="GO" id="GO:0042781">
    <property type="term" value="F:3'-tRNA processing endoribonuclease activity"/>
    <property type="evidence" value="ECO:0007669"/>
    <property type="project" value="UniProtKB-UniRule"/>
</dbReference>
<dbReference type="GO" id="GO:0008270">
    <property type="term" value="F:zinc ion binding"/>
    <property type="evidence" value="ECO:0007669"/>
    <property type="project" value="UniProtKB-UniRule"/>
</dbReference>
<dbReference type="CDD" id="cd07717">
    <property type="entry name" value="RNaseZ_ZiPD-like_MBL-fold"/>
    <property type="match status" value="1"/>
</dbReference>
<dbReference type="FunFam" id="3.60.15.10:FF:000075">
    <property type="entry name" value="Ribonuclease Z"/>
    <property type="match status" value="1"/>
</dbReference>
<dbReference type="Gene3D" id="3.60.15.10">
    <property type="entry name" value="Ribonuclease Z/Hydroxyacylglutathione hydrolase-like"/>
    <property type="match status" value="1"/>
</dbReference>
<dbReference type="HAMAP" id="MF_01818">
    <property type="entry name" value="RNase_Z_BN"/>
    <property type="match status" value="1"/>
</dbReference>
<dbReference type="InterPro" id="IPR001279">
    <property type="entry name" value="Metallo-B-lactamas"/>
</dbReference>
<dbReference type="InterPro" id="IPR036866">
    <property type="entry name" value="RibonucZ/Hydroxyglut_hydro"/>
</dbReference>
<dbReference type="InterPro" id="IPR013471">
    <property type="entry name" value="RNase_Z/BN"/>
</dbReference>
<dbReference type="NCBIfam" id="NF000801">
    <property type="entry name" value="PRK00055.1-3"/>
    <property type="match status" value="1"/>
</dbReference>
<dbReference type="NCBIfam" id="TIGR02651">
    <property type="entry name" value="RNase_Z"/>
    <property type="match status" value="1"/>
</dbReference>
<dbReference type="PANTHER" id="PTHR46018">
    <property type="entry name" value="ZINC PHOSPHODIESTERASE ELAC PROTEIN 1"/>
    <property type="match status" value="1"/>
</dbReference>
<dbReference type="PANTHER" id="PTHR46018:SF2">
    <property type="entry name" value="ZINC PHOSPHODIESTERASE ELAC PROTEIN 1"/>
    <property type="match status" value="1"/>
</dbReference>
<dbReference type="Pfam" id="PF00753">
    <property type="entry name" value="Lactamase_B"/>
    <property type="match status" value="1"/>
</dbReference>
<dbReference type="Pfam" id="PF12706">
    <property type="entry name" value="Lactamase_B_2"/>
    <property type="match status" value="1"/>
</dbReference>
<dbReference type="SUPFAM" id="SSF56281">
    <property type="entry name" value="Metallo-hydrolase/oxidoreductase"/>
    <property type="match status" value="1"/>
</dbReference>
<keyword id="KW-0255">Endonuclease</keyword>
<keyword id="KW-0378">Hydrolase</keyword>
<keyword id="KW-0479">Metal-binding</keyword>
<keyword id="KW-0540">Nuclease</keyword>
<keyword id="KW-0819">tRNA processing</keyword>
<keyword id="KW-0862">Zinc</keyword>
<protein>
    <recommendedName>
        <fullName evidence="1">Ribonuclease Z</fullName>
        <shortName evidence="1">RNase Z</shortName>
        <ecNumber evidence="1">3.1.26.11</ecNumber>
    </recommendedName>
    <alternativeName>
        <fullName evidence="1">tRNA 3 endonuclease</fullName>
    </alternativeName>
    <alternativeName>
        <fullName evidence="1">tRNase Z</fullName>
    </alternativeName>
</protein>
<evidence type="ECO:0000255" key="1">
    <source>
        <dbReference type="HAMAP-Rule" id="MF_01818"/>
    </source>
</evidence>
<proteinExistence type="inferred from homology"/>
<gene>
    <name evidence="1" type="primary">rnz</name>
    <name type="ordered locus">M164_1167</name>
</gene>
<name>RNZ_SACI6</name>
<accession>C4KGQ7</accession>
<feature type="chain" id="PRO_1000216015" description="Ribonuclease Z">
    <location>
        <begin position="1"/>
        <end position="291"/>
    </location>
</feature>
<feature type="active site" description="Proton acceptor" evidence="1">
    <location>
        <position position="65"/>
    </location>
</feature>
<feature type="binding site" evidence="1">
    <location>
        <position position="61"/>
    </location>
    <ligand>
        <name>Zn(2+)</name>
        <dbReference type="ChEBI" id="CHEBI:29105"/>
        <label>1</label>
        <note>catalytic</note>
    </ligand>
</feature>
<feature type="binding site" evidence="1">
    <location>
        <position position="63"/>
    </location>
    <ligand>
        <name>Zn(2+)</name>
        <dbReference type="ChEBI" id="CHEBI:29105"/>
        <label>1</label>
        <note>catalytic</note>
    </ligand>
</feature>
<feature type="binding site" evidence="1">
    <location>
        <position position="65"/>
    </location>
    <ligand>
        <name>Zn(2+)</name>
        <dbReference type="ChEBI" id="CHEBI:29105"/>
        <label>2</label>
        <note>catalytic</note>
    </ligand>
</feature>
<feature type="binding site" evidence="1">
    <location>
        <position position="66"/>
    </location>
    <ligand>
        <name>Zn(2+)</name>
        <dbReference type="ChEBI" id="CHEBI:29105"/>
        <label>2</label>
        <note>catalytic</note>
    </ligand>
</feature>
<feature type="binding site" evidence="1">
    <location>
        <position position="133"/>
    </location>
    <ligand>
        <name>Zn(2+)</name>
        <dbReference type="ChEBI" id="CHEBI:29105"/>
        <label>1</label>
        <note>catalytic</note>
    </ligand>
</feature>
<feature type="binding site" evidence="1">
    <location>
        <position position="201"/>
    </location>
    <ligand>
        <name>Zn(2+)</name>
        <dbReference type="ChEBI" id="CHEBI:29105"/>
        <label>1</label>
        <note>catalytic</note>
    </ligand>
</feature>
<feature type="binding site" evidence="1">
    <location>
        <position position="201"/>
    </location>
    <ligand>
        <name>Zn(2+)</name>
        <dbReference type="ChEBI" id="CHEBI:29105"/>
        <label>2</label>
        <note>catalytic</note>
    </ligand>
</feature>
<feature type="binding site" evidence="1">
    <location>
        <position position="257"/>
    </location>
    <ligand>
        <name>Zn(2+)</name>
        <dbReference type="ChEBI" id="CHEBI:29105"/>
        <label>2</label>
        <note>catalytic</note>
    </ligand>
</feature>